<dbReference type="EMBL" id="AE016958">
    <property type="protein sequence ID" value="AAS03670.1"/>
    <property type="molecule type" value="Genomic_DNA"/>
</dbReference>
<dbReference type="RefSeq" id="WP_003876267.1">
    <property type="nucleotide sequence ID" value="NZ_CP106873.1"/>
</dbReference>
<dbReference type="SMR" id="Q740J7"/>
<dbReference type="STRING" id="262316.MAP_1353"/>
<dbReference type="GeneID" id="75270528"/>
<dbReference type="KEGG" id="mpa:MAP_1353"/>
<dbReference type="eggNOG" id="COG0291">
    <property type="taxonomic scope" value="Bacteria"/>
</dbReference>
<dbReference type="HOGENOM" id="CLU_169643_4_2_11"/>
<dbReference type="Proteomes" id="UP000000580">
    <property type="component" value="Chromosome"/>
</dbReference>
<dbReference type="GO" id="GO:0022625">
    <property type="term" value="C:cytosolic large ribosomal subunit"/>
    <property type="evidence" value="ECO:0007669"/>
    <property type="project" value="TreeGrafter"/>
</dbReference>
<dbReference type="GO" id="GO:0003735">
    <property type="term" value="F:structural constituent of ribosome"/>
    <property type="evidence" value="ECO:0007669"/>
    <property type="project" value="InterPro"/>
</dbReference>
<dbReference type="GO" id="GO:0006412">
    <property type="term" value="P:translation"/>
    <property type="evidence" value="ECO:0007669"/>
    <property type="project" value="UniProtKB-UniRule"/>
</dbReference>
<dbReference type="FunFam" id="4.10.410.60:FF:000001">
    <property type="entry name" value="50S ribosomal protein L35"/>
    <property type="match status" value="1"/>
</dbReference>
<dbReference type="Gene3D" id="4.10.410.60">
    <property type="match status" value="1"/>
</dbReference>
<dbReference type="HAMAP" id="MF_00514">
    <property type="entry name" value="Ribosomal_bL35"/>
    <property type="match status" value="1"/>
</dbReference>
<dbReference type="InterPro" id="IPR001706">
    <property type="entry name" value="Ribosomal_bL35"/>
</dbReference>
<dbReference type="InterPro" id="IPR021137">
    <property type="entry name" value="Ribosomal_bL35-like"/>
</dbReference>
<dbReference type="InterPro" id="IPR018265">
    <property type="entry name" value="Ribosomal_bL35_CS"/>
</dbReference>
<dbReference type="InterPro" id="IPR037229">
    <property type="entry name" value="Ribosomal_bL35_sf"/>
</dbReference>
<dbReference type="NCBIfam" id="TIGR00001">
    <property type="entry name" value="rpmI_bact"/>
    <property type="match status" value="1"/>
</dbReference>
<dbReference type="PANTHER" id="PTHR33343">
    <property type="entry name" value="54S RIBOSOMAL PROTEIN BL35M"/>
    <property type="match status" value="1"/>
</dbReference>
<dbReference type="PANTHER" id="PTHR33343:SF1">
    <property type="entry name" value="LARGE RIBOSOMAL SUBUNIT PROTEIN BL35M"/>
    <property type="match status" value="1"/>
</dbReference>
<dbReference type="Pfam" id="PF01632">
    <property type="entry name" value="Ribosomal_L35p"/>
    <property type="match status" value="1"/>
</dbReference>
<dbReference type="PRINTS" id="PR00064">
    <property type="entry name" value="RIBOSOMALL35"/>
</dbReference>
<dbReference type="SUPFAM" id="SSF143034">
    <property type="entry name" value="L35p-like"/>
    <property type="match status" value="1"/>
</dbReference>
<dbReference type="PROSITE" id="PS00936">
    <property type="entry name" value="RIBOSOMAL_L35"/>
    <property type="match status" value="1"/>
</dbReference>
<organism>
    <name type="scientific">Mycolicibacterium paratuberculosis (strain ATCC BAA-968 / K-10)</name>
    <name type="common">Mycobacterium paratuberculosis</name>
    <dbReference type="NCBI Taxonomy" id="262316"/>
    <lineage>
        <taxon>Bacteria</taxon>
        <taxon>Bacillati</taxon>
        <taxon>Actinomycetota</taxon>
        <taxon>Actinomycetes</taxon>
        <taxon>Mycobacteriales</taxon>
        <taxon>Mycobacteriaceae</taxon>
        <taxon>Mycobacterium</taxon>
        <taxon>Mycobacterium avium complex (MAC)</taxon>
    </lineage>
</organism>
<protein>
    <recommendedName>
        <fullName evidence="1">Large ribosomal subunit protein bL35</fullName>
    </recommendedName>
    <alternativeName>
        <fullName evidence="3">50S ribosomal protein L35</fullName>
    </alternativeName>
</protein>
<comment type="similarity">
    <text evidence="1">Belongs to the bacterial ribosomal protein bL35 family.</text>
</comment>
<sequence length="64" mass="7309">MPKAKTHSGASKRFRRTGTGKIVRQKTNRRHLLEHKPTTRTRRLEGRTTVSANDTKRVNSLLNG</sequence>
<name>RL35_MYCPA</name>
<accession>Q740J7</accession>
<gene>
    <name evidence="1" type="primary">rpmI</name>
    <name type="ordered locus">MAP_1353</name>
</gene>
<keyword id="KW-1185">Reference proteome</keyword>
<keyword id="KW-0687">Ribonucleoprotein</keyword>
<keyword id="KW-0689">Ribosomal protein</keyword>
<reference key="1">
    <citation type="journal article" date="2005" name="Proc. Natl. Acad. Sci. U.S.A.">
        <title>The complete genome sequence of Mycobacterium avium subspecies paratuberculosis.</title>
        <authorList>
            <person name="Li L."/>
            <person name="Bannantine J.P."/>
            <person name="Zhang Q."/>
            <person name="Amonsin A."/>
            <person name="May B.J."/>
            <person name="Alt D."/>
            <person name="Banerji N."/>
            <person name="Kanjilal S."/>
            <person name="Kapur V."/>
        </authorList>
    </citation>
    <scope>NUCLEOTIDE SEQUENCE [LARGE SCALE GENOMIC DNA]</scope>
    <source>
        <strain>ATCC BAA-968 / K-10</strain>
    </source>
</reference>
<feature type="chain" id="PRO_0000177383" description="Large ribosomal subunit protein bL35">
    <location>
        <begin position="1"/>
        <end position="64"/>
    </location>
</feature>
<feature type="region of interest" description="Disordered" evidence="2">
    <location>
        <begin position="1"/>
        <end position="22"/>
    </location>
</feature>
<feature type="region of interest" description="Disordered" evidence="2">
    <location>
        <begin position="34"/>
        <end position="64"/>
    </location>
</feature>
<feature type="compositionally biased region" description="Basic and acidic residues" evidence="2">
    <location>
        <begin position="34"/>
        <end position="46"/>
    </location>
</feature>
<feature type="compositionally biased region" description="Polar residues" evidence="2">
    <location>
        <begin position="50"/>
        <end position="64"/>
    </location>
</feature>
<evidence type="ECO:0000255" key="1">
    <source>
        <dbReference type="HAMAP-Rule" id="MF_00514"/>
    </source>
</evidence>
<evidence type="ECO:0000256" key="2">
    <source>
        <dbReference type="SAM" id="MobiDB-lite"/>
    </source>
</evidence>
<evidence type="ECO:0000305" key="3"/>
<proteinExistence type="inferred from homology"/>